<accession>B9E9G8</accession>
<name>LUTA_MACCJ</name>
<reference key="1">
    <citation type="journal article" date="2009" name="J. Bacteriol.">
        <title>Complete genome sequence of Macrococcus caseolyticus strain JCSCS5402, reflecting the ancestral genome of the human-pathogenic staphylococci.</title>
        <authorList>
            <person name="Baba T."/>
            <person name="Kuwahara-Arai K."/>
            <person name="Uchiyama I."/>
            <person name="Takeuchi F."/>
            <person name="Ito T."/>
            <person name="Hiramatsu K."/>
        </authorList>
    </citation>
    <scope>NUCLEOTIDE SEQUENCE [LARGE SCALE GENOMIC DNA]</scope>
    <source>
        <strain>JCSC5402</strain>
    </source>
</reference>
<keyword id="KW-1185">Reference proteome</keyword>
<dbReference type="EMBL" id="AP009484">
    <property type="protein sequence ID" value="BAH16879.1"/>
    <property type="molecule type" value="Genomic_DNA"/>
</dbReference>
<dbReference type="RefSeq" id="WP_012656083.1">
    <property type="nucleotide sequence ID" value="NC_011999.1"/>
</dbReference>
<dbReference type="SMR" id="B9E9G8"/>
<dbReference type="STRING" id="458233.MCCL_0172"/>
<dbReference type="KEGG" id="mcl:MCCL_0172"/>
<dbReference type="eggNOG" id="COG0247">
    <property type="taxonomic scope" value="Bacteria"/>
</dbReference>
<dbReference type="HOGENOM" id="CLU_023081_1_0_9"/>
<dbReference type="OrthoDB" id="9770306at2"/>
<dbReference type="Proteomes" id="UP000001383">
    <property type="component" value="Chromosome"/>
</dbReference>
<dbReference type="GO" id="GO:0005829">
    <property type="term" value="C:cytosol"/>
    <property type="evidence" value="ECO:0007669"/>
    <property type="project" value="TreeGrafter"/>
</dbReference>
<dbReference type="GO" id="GO:0016491">
    <property type="term" value="F:oxidoreductase activity"/>
    <property type="evidence" value="ECO:0007669"/>
    <property type="project" value="UniProtKB-ARBA"/>
</dbReference>
<dbReference type="GO" id="GO:0006089">
    <property type="term" value="P:lactate metabolic process"/>
    <property type="evidence" value="ECO:0007669"/>
    <property type="project" value="UniProtKB-UniRule"/>
</dbReference>
<dbReference type="HAMAP" id="MF_02105">
    <property type="entry name" value="LutA"/>
    <property type="match status" value="1"/>
</dbReference>
<dbReference type="InterPro" id="IPR004017">
    <property type="entry name" value="Cys_rich_dom"/>
</dbReference>
<dbReference type="InterPro" id="IPR022822">
    <property type="entry name" value="LutA"/>
</dbReference>
<dbReference type="PANTHER" id="PTHR30296:SF0">
    <property type="entry name" value="LACTATE UTILIZATION PROTEIN A"/>
    <property type="match status" value="1"/>
</dbReference>
<dbReference type="PANTHER" id="PTHR30296">
    <property type="entry name" value="UNCHARACTERIZED PROTEIN YKGE"/>
    <property type="match status" value="1"/>
</dbReference>
<dbReference type="Pfam" id="PF02754">
    <property type="entry name" value="CCG"/>
    <property type="match status" value="2"/>
</dbReference>
<sequence length="245" mass="26767">MKVSLFSTCLVDVFEKRVGIATVELLEKLGCEVDFPAAQVCCGQPAYNSGYHEETKKAAKNMIKAFEQSEVVVAPSGSCVTMFKHYPDLFKNDAKWQARAQELADKTYEVTQFIVEVLGITNVGAKLDGVATIHPSCHMTRLLGNVTAPAKLLNEVEGLEVVELPKYYNCCGFGGTFAVKMSDVSGEMVDEKVDCIVESGADYLVGGDCSCLMNIDGRLRRRGVDVKAVHIIEILNNQVEAVTTR</sequence>
<evidence type="ECO:0000255" key="1">
    <source>
        <dbReference type="HAMAP-Rule" id="MF_02105"/>
    </source>
</evidence>
<gene>
    <name evidence="1" type="primary">lutA</name>
    <name type="ordered locus">MCCL_0172</name>
</gene>
<feature type="chain" id="PRO_0000384052" description="Lactate utilization protein A">
    <location>
        <begin position="1"/>
        <end position="245"/>
    </location>
</feature>
<protein>
    <recommendedName>
        <fullName evidence="1">Lactate utilization protein A</fullName>
    </recommendedName>
</protein>
<organism>
    <name type="scientific">Macrococcus caseolyticus (strain JCSC5402)</name>
    <name type="common">Macrococcoides caseolyticum</name>
    <dbReference type="NCBI Taxonomy" id="458233"/>
    <lineage>
        <taxon>Bacteria</taxon>
        <taxon>Bacillati</taxon>
        <taxon>Bacillota</taxon>
        <taxon>Bacilli</taxon>
        <taxon>Bacillales</taxon>
        <taxon>Staphylococcaceae</taxon>
        <taxon>Macrococcoides</taxon>
    </lineage>
</organism>
<proteinExistence type="inferred from homology"/>
<comment type="function">
    <text evidence="1">Is involved in L-lactate degradation and allows cells to grow with lactate as the sole carbon source.</text>
</comment>
<comment type="similarity">
    <text evidence="1">Belongs to the LutA/YkgE family.</text>
</comment>